<accession>P33916</accession>
<keyword id="KW-0067">ATP-binding</keyword>
<keyword id="KW-0547">Nucleotide-binding</keyword>
<keyword id="KW-1185">Reference proteome</keyword>
<keyword id="KW-0677">Repeat</keyword>
<keyword id="KW-0813">Transport</keyword>
<name>YEJF_ECOLI</name>
<reference key="1">
    <citation type="submission" date="1993-10" db="EMBL/GenBank/DDBJ databases">
        <title>Automated multiplex sequencing of the E.coli genome.</title>
        <authorList>
            <person name="Richterich P."/>
            <person name="Lakey N."/>
            <person name="Gryan G."/>
            <person name="Jaehn L."/>
            <person name="Mintz L."/>
            <person name="Robison K."/>
            <person name="Church G.M."/>
        </authorList>
    </citation>
    <scope>NUCLEOTIDE SEQUENCE [LARGE SCALE GENOMIC DNA]</scope>
    <source>
        <strain>K12 / BHB2600</strain>
    </source>
</reference>
<reference key="2">
    <citation type="journal article" date="1997" name="Science">
        <title>The complete genome sequence of Escherichia coli K-12.</title>
        <authorList>
            <person name="Blattner F.R."/>
            <person name="Plunkett G. III"/>
            <person name="Bloch C.A."/>
            <person name="Perna N.T."/>
            <person name="Burland V."/>
            <person name="Riley M."/>
            <person name="Collado-Vides J."/>
            <person name="Glasner J.D."/>
            <person name="Rode C.K."/>
            <person name="Mayhew G.F."/>
            <person name="Gregor J."/>
            <person name="Davis N.W."/>
            <person name="Kirkpatrick H.A."/>
            <person name="Goeden M.A."/>
            <person name="Rose D.J."/>
            <person name="Mau B."/>
            <person name="Shao Y."/>
        </authorList>
    </citation>
    <scope>NUCLEOTIDE SEQUENCE [LARGE SCALE GENOMIC DNA]</scope>
    <source>
        <strain>K12 / MG1655 / ATCC 47076</strain>
    </source>
</reference>
<reference key="3">
    <citation type="journal article" date="2006" name="Mol. Syst. Biol.">
        <title>Highly accurate genome sequences of Escherichia coli K-12 strains MG1655 and W3110.</title>
        <authorList>
            <person name="Hayashi K."/>
            <person name="Morooka N."/>
            <person name="Yamamoto Y."/>
            <person name="Fujita K."/>
            <person name="Isono K."/>
            <person name="Choi S."/>
            <person name="Ohtsubo E."/>
            <person name="Baba T."/>
            <person name="Wanner B.L."/>
            <person name="Mori H."/>
            <person name="Horiuchi T."/>
        </authorList>
    </citation>
    <scope>NUCLEOTIDE SEQUENCE [LARGE SCALE GENOMIC DNA]</scope>
    <source>
        <strain>K12 / W3110 / ATCC 27325 / DSM 5911</strain>
    </source>
</reference>
<reference key="4">
    <citation type="journal article" date="1996" name="DNA Res.">
        <title>A 460-kb DNA sequence of the Escherichia coli K-12 genome corresponding to the 40.1-50.0 min region on the linkage map.</title>
        <authorList>
            <person name="Itoh T."/>
            <person name="Aiba H."/>
            <person name="Baba T."/>
            <person name="Fujita K."/>
            <person name="Hayashi K."/>
            <person name="Inada T."/>
            <person name="Isono K."/>
            <person name="Kasai H."/>
            <person name="Kimura S."/>
            <person name="Kitakawa M."/>
            <person name="Kitagawa M."/>
            <person name="Makino K."/>
            <person name="Miki T."/>
            <person name="Mizobuchi K."/>
            <person name="Mori H."/>
            <person name="Mori T."/>
            <person name="Motomura K."/>
            <person name="Nakade S."/>
            <person name="Nakamura Y."/>
            <person name="Nashimoto H."/>
            <person name="Nishio Y."/>
            <person name="Oshima T."/>
            <person name="Saito N."/>
            <person name="Sampei G."/>
            <person name="Seki Y."/>
            <person name="Sivasundaram S."/>
            <person name="Tagami H."/>
            <person name="Takeda J."/>
            <person name="Takemoto K."/>
            <person name="Wada C."/>
            <person name="Yamamoto Y."/>
            <person name="Horiuchi T."/>
        </authorList>
    </citation>
    <scope>NUCLEOTIDE SEQUENCE [LARGE SCALE GENOMIC DNA] OF 1-370</scope>
    <source>
        <strain>K12 / W3110 / ATCC 27325 / DSM 5911</strain>
    </source>
</reference>
<protein>
    <recommendedName>
        <fullName>Uncharacterized ABC transporter ATP-binding protein YejF</fullName>
    </recommendedName>
</protein>
<feature type="chain" id="PRO_0000093168" description="Uncharacterized ABC transporter ATP-binding protein YejF">
    <location>
        <begin position="1"/>
        <end position="529"/>
    </location>
</feature>
<feature type="domain" description="ABC transporter 1" evidence="1">
    <location>
        <begin position="6"/>
        <end position="257"/>
    </location>
</feature>
<feature type="domain" description="ABC transporter 2" evidence="1">
    <location>
        <begin position="287"/>
        <end position="526"/>
    </location>
</feature>
<feature type="binding site" evidence="1">
    <location>
        <begin position="42"/>
        <end position="49"/>
    </location>
    <ligand>
        <name>ATP</name>
        <dbReference type="ChEBI" id="CHEBI:30616"/>
        <label>1</label>
    </ligand>
</feature>
<feature type="binding site" evidence="1">
    <location>
        <begin position="319"/>
        <end position="326"/>
    </location>
    <ligand>
        <name>ATP</name>
        <dbReference type="ChEBI" id="CHEBI:30616"/>
        <label>2</label>
    </ligand>
</feature>
<gene>
    <name type="primary">yejF</name>
    <name type="ordered locus">b2180</name>
    <name type="ordered locus">JW2168</name>
</gene>
<sequence length="529" mass="58726">MTQTLLAIENLSVGFRHQQTVRTVVNDVSLQIEAGETLALVGESGSGKSVTALSILRLLPSPPVEYLSGDIRFHGESLLHASDQTLRGVRGNKIAMIFQEPMVSLNPLHTLEKQLYEVLSLHRGMRREAARGEILNCLDRVGIRQAAKRLTDYPHQLSGGERQRVMIAMALLTRPELLIADEPTTALDVSVQAQILQLLRELQGELNMGMLFITHNLSIVRKLAHRVAVMQNGRCVEQNYAATLFASPTHPYTQKLLNSEPSGDPVPLPEPASTLLDVEQLQVAFPIRKGILKRIVDHNVVVKNISFTLRAGETLGLVGESGSGKSTTGLALLRLINSQGSIIFDGQPLQNLNRRQLLPIRHRIQVVFQDPNSSLNPRLNVLQIIEEGLRVHQPTLSAAQREQQVIAVMHEVGLDPETRHRYPAEFSGGQRQRIAIARALILKPSLIILDEPTSSLDKTVQAQILTLLKSLQQKHQLAYLFISHDLHVVRALCHQVIILRQGEVVEQGPCARVFATPQQEYTRQLLALS</sequence>
<dbReference type="EMBL" id="U00008">
    <property type="protein sequence ID" value="AAA16379.1"/>
    <property type="molecule type" value="Genomic_DNA"/>
</dbReference>
<dbReference type="EMBL" id="U00096">
    <property type="protein sequence ID" value="AAC75241.1"/>
    <property type="molecule type" value="Genomic_DNA"/>
</dbReference>
<dbReference type="EMBL" id="AP009048">
    <property type="protein sequence ID" value="BAA15988.2"/>
    <property type="molecule type" value="Genomic_DNA"/>
</dbReference>
<dbReference type="PIR" id="C64987">
    <property type="entry name" value="C64987"/>
</dbReference>
<dbReference type="RefSeq" id="NP_416685.1">
    <property type="nucleotide sequence ID" value="NC_000913.3"/>
</dbReference>
<dbReference type="RefSeq" id="WP_000194927.1">
    <property type="nucleotide sequence ID" value="NZ_LN832404.1"/>
</dbReference>
<dbReference type="SMR" id="P33916"/>
<dbReference type="BioGRID" id="4260469">
    <property type="interactions" value="23"/>
</dbReference>
<dbReference type="BioGRID" id="851031">
    <property type="interactions" value="1"/>
</dbReference>
<dbReference type="ComplexPortal" id="CPX-4362">
    <property type="entry name" value="Peptide ABC transporter complex"/>
</dbReference>
<dbReference type="DIP" id="DIP-11936N"/>
<dbReference type="FunCoup" id="P33916">
    <property type="interactions" value="394"/>
</dbReference>
<dbReference type="IntAct" id="P33916">
    <property type="interactions" value="11"/>
</dbReference>
<dbReference type="STRING" id="511145.b2180"/>
<dbReference type="TCDB" id="3.A.1.5.21">
    <property type="family name" value="the atp-binding cassette (abc) superfamily"/>
</dbReference>
<dbReference type="jPOST" id="P33916"/>
<dbReference type="PaxDb" id="511145-b2180"/>
<dbReference type="EnsemblBacteria" id="AAC75241">
    <property type="protein sequence ID" value="AAC75241"/>
    <property type="gene ID" value="b2180"/>
</dbReference>
<dbReference type="GeneID" id="946689"/>
<dbReference type="KEGG" id="ecj:JW2168"/>
<dbReference type="KEGG" id="eco:b2180"/>
<dbReference type="KEGG" id="ecoc:C3026_12195"/>
<dbReference type="PATRIC" id="fig|1411691.4.peg.56"/>
<dbReference type="EchoBASE" id="EB1975"/>
<dbReference type="eggNOG" id="COG4172">
    <property type="taxonomic scope" value="Bacteria"/>
</dbReference>
<dbReference type="HOGENOM" id="CLU_000604_86_0_6"/>
<dbReference type="InParanoid" id="P33916"/>
<dbReference type="OMA" id="KHEYSKL"/>
<dbReference type="OrthoDB" id="9784450at2"/>
<dbReference type="PhylomeDB" id="P33916"/>
<dbReference type="BioCyc" id="EcoCyc:YEJF-MONOMER"/>
<dbReference type="BioCyc" id="MetaCyc:YEJF-MONOMER"/>
<dbReference type="PRO" id="PR:P33916"/>
<dbReference type="Proteomes" id="UP000000625">
    <property type="component" value="Chromosome"/>
</dbReference>
<dbReference type="GO" id="GO:0055052">
    <property type="term" value="C:ATP-binding cassette (ABC) transporter complex, substrate-binding subunit-containing"/>
    <property type="evidence" value="ECO:0000303"/>
    <property type="project" value="ComplexPortal"/>
</dbReference>
<dbReference type="GO" id="GO:0016020">
    <property type="term" value="C:membrane"/>
    <property type="evidence" value="ECO:0000303"/>
    <property type="project" value="ComplexPortal"/>
</dbReference>
<dbReference type="GO" id="GO:0005886">
    <property type="term" value="C:plasma membrane"/>
    <property type="evidence" value="ECO:0000314"/>
    <property type="project" value="EcoCyc"/>
</dbReference>
<dbReference type="GO" id="GO:0005524">
    <property type="term" value="F:ATP binding"/>
    <property type="evidence" value="ECO:0000255"/>
    <property type="project" value="EcoCyc"/>
</dbReference>
<dbReference type="GO" id="GO:0016887">
    <property type="term" value="F:ATP hydrolysis activity"/>
    <property type="evidence" value="ECO:0007669"/>
    <property type="project" value="InterPro"/>
</dbReference>
<dbReference type="GO" id="GO:0042626">
    <property type="term" value="F:ATPase-coupled transmembrane transporter activity"/>
    <property type="evidence" value="ECO:0000250"/>
    <property type="project" value="EcoCyc"/>
</dbReference>
<dbReference type="GO" id="GO:0022857">
    <property type="term" value="F:transmembrane transporter activity"/>
    <property type="evidence" value="ECO:0000318"/>
    <property type="project" value="GO_Central"/>
</dbReference>
<dbReference type="GO" id="GO:0042884">
    <property type="term" value="P:microcin transport"/>
    <property type="evidence" value="ECO:0000314"/>
    <property type="project" value="ComplexPortal"/>
</dbReference>
<dbReference type="GO" id="GO:0035672">
    <property type="term" value="P:oligopeptide transmembrane transport"/>
    <property type="evidence" value="ECO:0000314"/>
    <property type="project" value="EcoCyc"/>
</dbReference>
<dbReference type="GO" id="GO:0015833">
    <property type="term" value="P:peptide transport"/>
    <property type="evidence" value="ECO:0000303"/>
    <property type="project" value="ComplexPortal"/>
</dbReference>
<dbReference type="CDD" id="cd03257">
    <property type="entry name" value="ABC_NikE_OppD_transporters"/>
    <property type="match status" value="2"/>
</dbReference>
<dbReference type="FunFam" id="3.40.50.300:FF:000016">
    <property type="entry name" value="Oligopeptide ABC transporter ATP-binding component"/>
    <property type="match status" value="2"/>
</dbReference>
<dbReference type="Gene3D" id="3.40.50.300">
    <property type="entry name" value="P-loop containing nucleotide triphosphate hydrolases"/>
    <property type="match status" value="2"/>
</dbReference>
<dbReference type="InterPro" id="IPR003593">
    <property type="entry name" value="AAA+_ATPase"/>
</dbReference>
<dbReference type="InterPro" id="IPR050319">
    <property type="entry name" value="ABC_transp_ATP-bind"/>
</dbReference>
<dbReference type="InterPro" id="IPR003439">
    <property type="entry name" value="ABC_transporter-like_ATP-bd"/>
</dbReference>
<dbReference type="InterPro" id="IPR017871">
    <property type="entry name" value="ABC_transporter-like_CS"/>
</dbReference>
<dbReference type="InterPro" id="IPR013563">
    <property type="entry name" value="Oligopep_ABC_C"/>
</dbReference>
<dbReference type="InterPro" id="IPR027417">
    <property type="entry name" value="P-loop_NTPase"/>
</dbReference>
<dbReference type="NCBIfam" id="NF007739">
    <property type="entry name" value="PRK10419.1"/>
    <property type="match status" value="2"/>
</dbReference>
<dbReference type="NCBIfam" id="NF008453">
    <property type="entry name" value="PRK11308.1"/>
    <property type="match status" value="2"/>
</dbReference>
<dbReference type="NCBIfam" id="NF011713">
    <property type="entry name" value="PRK15134.1"/>
    <property type="match status" value="1"/>
</dbReference>
<dbReference type="PANTHER" id="PTHR43776:SF7">
    <property type="entry name" value="D,D-DIPEPTIDE TRANSPORT ATP-BINDING PROTEIN DDPF-RELATED"/>
    <property type="match status" value="1"/>
</dbReference>
<dbReference type="PANTHER" id="PTHR43776">
    <property type="entry name" value="TRANSPORT ATP-BINDING PROTEIN"/>
    <property type="match status" value="1"/>
</dbReference>
<dbReference type="Pfam" id="PF00005">
    <property type="entry name" value="ABC_tran"/>
    <property type="match status" value="2"/>
</dbReference>
<dbReference type="Pfam" id="PF08352">
    <property type="entry name" value="oligo_HPY"/>
    <property type="match status" value="1"/>
</dbReference>
<dbReference type="SMART" id="SM00382">
    <property type="entry name" value="AAA"/>
    <property type="match status" value="2"/>
</dbReference>
<dbReference type="SUPFAM" id="SSF52540">
    <property type="entry name" value="P-loop containing nucleoside triphosphate hydrolases"/>
    <property type="match status" value="2"/>
</dbReference>
<dbReference type="PROSITE" id="PS00211">
    <property type="entry name" value="ABC_TRANSPORTER_1"/>
    <property type="match status" value="2"/>
</dbReference>
<dbReference type="PROSITE" id="PS50893">
    <property type="entry name" value="ABC_TRANSPORTER_2"/>
    <property type="match status" value="2"/>
</dbReference>
<evidence type="ECO:0000255" key="1">
    <source>
        <dbReference type="PROSITE-ProRule" id="PRU00434"/>
    </source>
</evidence>
<evidence type="ECO:0000305" key="2"/>
<organism>
    <name type="scientific">Escherichia coli (strain K12)</name>
    <dbReference type="NCBI Taxonomy" id="83333"/>
    <lineage>
        <taxon>Bacteria</taxon>
        <taxon>Pseudomonadati</taxon>
        <taxon>Pseudomonadota</taxon>
        <taxon>Gammaproteobacteria</taxon>
        <taxon>Enterobacterales</taxon>
        <taxon>Enterobacteriaceae</taxon>
        <taxon>Escherichia</taxon>
    </lineage>
</organism>
<proteinExistence type="evidence at protein level"/>
<comment type="interaction">
    <interactant intactId="EBI-560808">
        <id>P33916</id>
    </interactant>
    <interactant intactId="EBI-560815">
        <id>P76027</id>
        <label>oppD</label>
    </interactant>
    <organismsDiffer>false</organismsDiffer>
    <experiments>3</experiments>
</comment>
<comment type="similarity">
    <text evidence="2">Belongs to the ABC transporter superfamily.</text>
</comment>